<comment type="function">
    <text evidence="2">Involved in base excision repair of DNA damaged by oxidation or by mutagenic agents. Acts as a DNA glycosylase that recognizes and removes damaged bases. Has a preference for oxidized purines, such as 7,8-dihydro-8-oxoguanine (8-oxoG). Has AP (apurinic/apyrimidinic) lyase activity and introduces nicks in the DNA strand. Cleaves the DNA backbone by beta-delta elimination to generate a single-strand break at the site of the removed base with both 3'- and 5'-phosphates.</text>
</comment>
<comment type="catalytic activity">
    <reaction evidence="2">
        <text>Hydrolysis of DNA containing ring-opened 7-methylguanine residues, releasing 2,6-diamino-4-hydroxy-5-(N-methyl)formamidopyrimidine.</text>
        <dbReference type="EC" id="3.2.2.23"/>
    </reaction>
</comment>
<comment type="catalytic activity">
    <reaction evidence="2">
        <text>2'-deoxyribonucleotide-(2'-deoxyribose 5'-phosphate)-2'-deoxyribonucleotide-DNA = a 3'-end 2'-deoxyribonucleotide-(2,3-dehydro-2,3-deoxyribose 5'-phosphate)-DNA + a 5'-end 5'-phospho-2'-deoxyribonucleoside-DNA + H(+)</text>
        <dbReference type="Rhea" id="RHEA:66592"/>
        <dbReference type="Rhea" id="RHEA-COMP:13180"/>
        <dbReference type="Rhea" id="RHEA-COMP:16897"/>
        <dbReference type="Rhea" id="RHEA-COMP:17067"/>
        <dbReference type="ChEBI" id="CHEBI:15378"/>
        <dbReference type="ChEBI" id="CHEBI:136412"/>
        <dbReference type="ChEBI" id="CHEBI:157695"/>
        <dbReference type="ChEBI" id="CHEBI:167181"/>
        <dbReference type="EC" id="4.2.99.18"/>
    </reaction>
</comment>
<comment type="cofactor">
    <cofactor evidence="2">
        <name>Zn(2+)</name>
        <dbReference type="ChEBI" id="CHEBI:29105"/>
    </cofactor>
    <text evidence="2">Binds 1 zinc ion per subunit.</text>
</comment>
<comment type="subunit">
    <text evidence="2">Monomer.</text>
</comment>
<comment type="similarity">
    <text evidence="2">Belongs to the FPG family.</text>
</comment>
<gene>
    <name evidence="2" type="primary">mutM</name>
    <name evidence="2" type="synonym">fpg</name>
    <name type="ordered locus">SeSA_A3925</name>
</gene>
<feature type="initiator methionine" description="Removed" evidence="1">
    <location>
        <position position="1"/>
    </location>
</feature>
<feature type="chain" id="PRO_1000094077" description="Formamidopyrimidine-DNA glycosylase">
    <location>
        <begin position="2"/>
        <end position="269"/>
    </location>
</feature>
<feature type="zinc finger region" description="FPG-type" evidence="2">
    <location>
        <begin position="235"/>
        <end position="269"/>
    </location>
</feature>
<feature type="active site" description="Schiff-base intermediate with DNA" evidence="2">
    <location>
        <position position="2"/>
    </location>
</feature>
<feature type="active site" description="Proton donor" evidence="2">
    <location>
        <position position="3"/>
    </location>
</feature>
<feature type="active site" description="Proton donor; for beta-elimination activity" evidence="2">
    <location>
        <position position="57"/>
    </location>
</feature>
<feature type="active site" description="Proton donor; for delta-elimination activity" evidence="2">
    <location>
        <position position="259"/>
    </location>
</feature>
<feature type="binding site" evidence="2">
    <location>
        <position position="90"/>
    </location>
    <ligand>
        <name>DNA</name>
        <dbReference type="ChEBI" id="CHEBI:16991"/>
    </ligand>
</feature>
<feature type="binding site" evidence="2">
    <location>
        <position position="109"/>
    </location>
    <ligand>
        <name>DNA</name>
        <dbReference type="ChEBI" id="CHEBI:16991"/>
    </ligand>
</feature>
<feature type="binding site" evidence="2">
    <location>
        <position position="150"/>
    </location>
    <ligand>
        <name>DNA</name>
        <dbReference type="ChEBI" id="CHEBI:16991"/>
    </ligand>
</feature>
<name>FPG_SALSV</name>
<keyword id="KW-0227">DNA damage</keyword>
<keyword id="KW-0234">DNA repair</keyword>
<keyword id="KW-0238">DNA-binding</keyword>
<keyword id="KW-0326">Glycosidase</keyword>
<keyword id="KW-0378">Hydrolase</keyword>
<keyword id="KW-0456">Lyase</keyword>
<keyword id="KW-0479">Metal-binding</keyword>
<keyword id="KW-0511">Multifunctional enzyme</keyword>
<keyword id="KW-0862">Zinc</keyword>
<keyword id="KW-0863">Zinc-finger</keyword>
<accession>B4TZX7</accession>
<proteinExistence type="inferred from homology"/>
<evidence type="ECO:0000250" key="1"/>
<evidence type="ECO:0000255" key="2">
    <source>
        <dbReference type="HAMAP-Rule" id="MF_00103"/>
    </source>
</evidence>
<dbReference type="EC" id="3.2.2.23" evidence="2"/>
<dbReference type="EC" id="4.2.99.18" evidence="2"/>
<dbReference type="EMBL" id="CP001127">
    <property type="protein sequence ID" value="ACF89194.1"/>
    <property type="molecule type" value="Genomic_DNA"/>
</dbReference>
<dbReference type="RefSeq" id="WP_001114515.1">
    <property type="nucleotide sequence ID" value="NC_011094.1"/>
</dbReference>
<dbReference type="SMR" id="B4TZX7"/>
<dbReference type="KEGG" id="sew:SeSA_A3925"/>
<dbReference type="HOGENOM" id="CLU_038423_1_1_6"/>
<dbReference type="Proteomes" id="UP000001865">
    <property type="component" value="Chromosome"/>
</dbReference>
<dbReference type="GO" id="GO:0034039">
    <property type="term" value="F:8-oxo-7,8-dihydroguanine DNA N-glycosylase activity"/>
    <property type="evidence" value="ECO:0007669"/>
    <property type="project" value="TreeGrafter"/>
</dbReference>
<dbReference type="GO" id="GO:0140078">
    <property type="term" value="F:class I DNA-(apurinic or apyrimidinic site) endonuclease activity"/>
    <property type="evidence" value="ECO:0007669"/>
    <property type="project" value="UniProtKB-EC"/>
</dbReference>
<dbReference type="GO" id="GO:0003684">
    <property type="term" value="F:damaged DNA binding"/>
    <property type="evidence" value="ECO:0007669"/>
    <property type="project" value="InterPro"/>
</dbReference>
<dbReference type="GO" id="GO:0008270">
    <property type="term" value="F:zinc ion binding"/>
    <property type="evidence" value="ECO:0007669"/>
    <property type="project" value="UniProtKB-UniRule"/>
</dbReference>
<dbReference type="GO" id="GO:0006284">
    <property type="term" value="P:base-excision repair"/>
    <property type="evidence" value="ECO:0007669"/>
    <property type="project" value="InterPro"/>
</dbReference>
<dbReference type="CDD" id="cd08966">
    <property type="entry name" value="EcFpg-like_N"/>
    <property type="match status" value="1"/>
</dbReference>
<dbReference type="FunFam" id="1.10.8.50:FF:000003">
    <property type="entry name" value="Formamidopyrimidine-DNA glycosylase"/>
    <property type="match status" value="1"/>
</dbReference>
<dbReference type="FunFam" id="3.20.190.10:FF:000001">
    <property type="entry name" value="Formamidopyrimidine-DNA glycosylase"/>
    <property type="match status" value="1"/>
</dbReference>
<dbReference type="Gene3D" id="1.10.8.50">
    <property type="match status" value="1"/>
</dbReference>
<dbReference type="Gene3D" id="3.20.190.10">
    <property type="entry name" value="MutM-like, N-terminal"/>
    <property type="match status" value="1"/>
</dbReference>
<dbReference type="HAMAP" id="MF_00103">
    <property type="entry name" value="Fapy_DNA_glycosyl"/>
    <property type="match status" value="1"/>
</dbReference>
<dbReference type="InterPro" id="IPR015886">
    <property type="entry name" value="DNA_glyclase/AP_lyase_DNA-bd"/>
</dbReference>
<dbReference type="InterPro" id="IPR015887">
    <property type="entry name" value="DNA_glyclase_Znf_dom_DNA_BS"/>
</dbReference>
<dbReference type="InterPro" id="IPR020629">
    <property type="entry name" value="Formamido-pyr_DNA_Glyclase"/>
</dbReference>
<dbReference type="InterPro" id="IPR012319">
    <property type="entry name" value="FPG_cat"/>
</dbReference>
<dbReference type="InterPro" id="IPR035937">
    <property type="entry name" value="MutM-like_N-ter"/>
</dbReference>
<dbReference type="InterPro" id="IPR010979">
    <property type="entry name" value="Ribosomal_uS13-like_H2TH"/>
</dbReference>
<dbReference type="InterPro" id="IPR000214">
    <property type="entry name" value="Znf_DNA_glyclase/AP_lyase"/>
</dbReference>
<dbReference type="InterPro" id="IPR010663">
    <property type="entry name" value="Znf_FPG/IleRS"/>
</dbReference>
<dbReference type="NCBIfam" id="TIGR00577">
    <property type="entry name" value="fpg"/>
    <property type="match status" value="1"/>
</dbReference>
<dbReference type="NCBIfam" id="NF002211">
    <property type="entry name" value="PRK01103.1"/>
    <property type="match status" value="1"/>
</dbReference>
<dbReference type="PANTHER" id="PTHR22993">
    <property type="entry name" value="FORMAMIDOPYRIMIDINE-DNA GLYCOSYLASE"/>
    <property type="match status" value="1"/>
</dbReference>
<dbReference type="PANTHER" id="PTHR22993:SF9">
    <property type="entry name" value="FORMAMIDOPYRIMIDINE-DNA GLYCOSYLASE"/>
    <property type="match status" value="1"/>
</dbReference>
<dbReference type="Pfam" id="PF01149">
    <property type="entry name" value="Fapy_DNA_glyco"/>
    <property type="match status" value="1"/>
</dbReference>
<dbReference type="Pfam" id="PF06831">
    <property type="entry name" value="H2TH"/>
    <property type="match status" value="1"/>
</dbReference>
<dbReference type="Pfam" id="PF06827">
    <property type="entry name" value="zf-FPG_IleRS"/>
    <property type="match status" value="1"/>
</dbReference>
<dbReference type="SMART" id="SM00898">
    <property type="entry name" value="Fapy_DNA_glyco"/>
    <property type="match status" value="1"/>
</dbReference>
<dbReference type="SMART" id="SM01232">
    <property type="entry name" value="H2TH"/>
    <property type="match status" value="1"/>
</dbReference>
<dbReference type="SUPFAM" id="SSF57716">
    <property type="entry name" value="Glucocorticoid receptor-like (DNA-binding domain)"/>
    <property type="match status" value="1"/>
</dbReference>
<dbReference type="SUPFAM" id="SSF81624">
    <property type="entry name" value="N-terminal domain of MutM-like DNA repair proteins"/>
    <property type="match status" value="1"/>
</dbReference>
<dbReference type="SUPFAM" id="SSF46946">
    <property type="entry name" value="S13-like H2TH domain"/>
    <property type="match status" value="1"/>
</dbReference>
<dbReference type="PROSITE" id="PS51068">
    <property type="entry name" value="FPG_CAT"/>
    <property type="match status" value="1"/>
</dbReference>
<dbReference type="PROSITE" id="PS01242">
    <property type="entry name" value="ZF_FPG_1"/>
    <property type="match status" value="1"/>
</dbReference>
<dbReference type="PROSITE" id="PS51066">
    <property type="entry name" value="ZF_FPG_2"/>
    <property type="match status" value="1"/>
</dbReference>
<organism>
    <name type="scientific">Salmonella schwarzengrund (strain CVM19633)</name>
    <dbReference type="NCBI Taxonomy" id="439843"/>
    <lineage>
        <taxon>Bacteria</taxon>
        <taxon>Pseudomonadati</taxon>
        <taxon>Pseudomonadota</taxon>
        <taxon>Gammaproteobacteria</taxon>
        <taxon>Enterobacterales</taxon>
        <taxon>Enterobacteriaceae</taxon>
        <taxon>Salmonella</taxon>
    </lineage>
</organism>
<sequence length="269" mass="30223">MPELPEVETSRRGIEPHLVGATILHAHIRNGRLRWPVSDEIYRLSDTPVLSVQRRAKYLLLELPDGWIIIHLGMSGSLRILSEALPAEKHDHVDLVMSNGKILRYTDPRRFGAWLWTKELEGHNVLAHLGPEPLSDEFNGEYLQQKCAKKKTAIKPWLMDNKLVVGVGNIYASESLFAAGIHPDRLASSLSTEECDLLARVIKAVLLRSIEQGGTTLKDFLQSDGKPGYFAQELQVYGRKGEPCRVCGTPIVATKHAQRATFYCRHCQK</sequence>
<protein>
    <recommendedName>
        <fullName evidence="2">Formamidopyrimidine-DNA glycosylase</fullName>
        <shortName evidence="2">Fapy-DNA glycosylase</shortName>
        <ecNumber evidence="2">3.2.2.23</ecNumber>
    </recommendedName>
    <alternativeName>
        <fullName evidence="2">DNA-(apurinic or apyrimidinic site) lyase MutM</fullName>
        <shortName evidence="2">AP lyase MutM</shortName>
        <ecNumber evidence="2">4.2.99.18</ecNumber>
    </alternativeName>
</protein>
<reference key="1">
    <citation type="journal article" date="2011" name="J. Bacteriol.">
        <title>Comparative genomics of 28 Salmonella enterica isolates: evidence for CRISPR-mediated adaptive sublineage evolution.</title>
        <authorList>
            <person name="Fricke W.F."/>
            <person name="Mammel M.K."/>
            <person name="McDermott P.F."/>
            <person name="Tartera C."/>
            <person name="White D.G."/>
            <person name="Leclerc J.E."/>
            <person name="Ravel J."/>
            <person name="Cebula T.A."/>
        </authorList>
    </citation>
    <scope>NUCLEOTIDE SEQUENCE [LARGE SCALE GENOMIC DNA]</scope>
    <source>
        <strain>CVM19633</strain>
    </source>
</reference>